<name>Y872_VIBCH</name>
<evidence type="ECO:0000255" key="1">
    <source>
        <dbReference type="HAMAP-Rule" id="MF_01064"/>
    </source>
</evidence>
<keyword id="KW-1185">Reference proteome</keyword>
<gene>
    <name type="ordered locus">VC_0872</name>
</gene>
<feature type="chain" id="PRO_0000215546" description="UPF0253 protein VC_0872">
    <location>
        <begin position="1"/>
        <end position="67"/>
    </location>
</feature>
<proteinExistence type="inferred from homology"/>
<protein>
    <recommendedName>
        <fullName evidence="1">UPF0253 protein VC_0872</fullName>
    </recommendedName>
</protein>
<sequence>MKVYDCCELVRELYAQIGSGDQGYIPQAISCAVRALNEIAADTALPLAAREKAAFAAANLLISDFED</sequence>
<accession>Q9KTN0</accession>
<reference key="1">
    <citation type="journal article" date="2000" name="Nature">
        <title>DNA sequence of both chromosomes of the cholera pathogen Vibrio cholerae.</title>
        <authorList>
            <person name="Heidelberg J.F."/>
            <person name="Eisen J.A."/>
            <person name="Nelson W.C."/>
            <person name="Clayton R.A."/>
            <person name="Gwinn M.L."/>
            <person name="Dodson R.J."/>
            <person name="Haft D.H."/>
            <person name="Hickey E.K."/>
            <person name="Peterson J.D."/>
            <person name="Umayam L.A."/>
            <person name="Gill S.R."/>
            <person name="Nelson K.E."/>
            <person name="Read T.D."/>
            <person name="Tettelin H."/>
            <person name="Richardson D.L."/>
            <person name="Ermolaeva M.D."/>
            <person name="Vamathevan J.J."/>
            <person name="Bass S."/>
            <person name="Qin H."/>
            <person name="Dragoi I."/>
            <person name="Sellers P."/>
            <person name="McDonald L.A."/>
            <person name="Utterback T.R."/>
            <person name="Fleischmann R.D."/>
            <person name="Nierman W.C."/>
            <person name="White O."/>
            <person name="Salzberg S.L."/>
            <person name="Smith H.O."/>
            <person name="Colwell R.R."/>
            <person name="Mekalanos J.J."/>
            <person name="Venter J.C."/>
            <person name="Fraser C.M."/>
        </authorList>
    </citation>
    <scope>NUCLEOTIDE SEQUENCE [LARGE SCALE GENOMIC DNA]</scope>
    <source>
        <strain>ATCC 39315 / El Tor Inaba N16961</strain>
    </source>
</reference>
<organism>
    <name type="scientific">Vibrio cholerae serotype O1 (strain ATCC 39315 / El Tor Inaba N16961)</name>
    <dbReference type="NCBI Taxonomy" id="243277"/>
    <lineage>
        <taxon>Bacteria</taxon>
        <taxon>Pseudomonadati</taxon>
        <taxon>Pseudomonadota</taxon>
        <taxon>Gammaproteobacteria</taxon>
        <taxon>Vibrionales</taxon>
        <taxon>Vibrionaceae</taxon>
        <taxon>Vibrio</taxon>
    </lineage>
</organism>
<comment type="similarity">
    <text evidence="1">Belongs to the UPF0253 family.</text>
</comment>
<dbReference type="EMBL" id="AE003852">
    <property type="protein sequence ID" value="AAF94034.1"/>
    <property type="molecule type" value="Genomic_DNA"/>
</dbReference>
<dbReference type="PIR" id="E82268">
    <property type="entry name" value="E82268"/>
</dbReference>
<dbReference type="RefSeq" id="NP_230519.1">
    <property type="nucleotide sequence ID" value="NC_002505.1"/>
</dbReference>
<dbReference type="RefSeq" id="WP_000870111.1">
    <property type="nucleotide sequence ID" value="NZ_LT906614.1"/>
</dbReference>
<dbReference type="SMR" id="Q9KTN0"/>
<dbReference type="STRING" id="243277.VC_0872"/>
<dbReference type="DNASU" id="2614539"/>
<dbReference type="EnsemblBacteria" id="AAF94034">
    <property type="protein sequence ID" value="AAF94034"/>
    <property type="gene ID" value="VC_0872"/>
</dbReference>
<dbReference type="KEGG" id="vch:VC_0872"/>
<dbReference type="PATRIC" id="fig|243277.26.peg.832"/>
<dbReference type="eggNOG" id="ENOG5032Z3X">
    <property type="taxonomic scope" value="Bacteria"/>
</dbReference>
<dbReference type="HOGENOM" id="CLU_190008_0_0_6"/>
<dbReference type="Proteomes" id="UP000000584">
    <property type="component" value="Chromosome 1"/>
</dbReference>
<dbReference type="HAMAP" id="MF_01064">
    <property type="entry name" value="UPF0253"/>
    <property type="match status" value="1"/>
</dbReference>
<dbReference type="InterPro" id="IPR009624">
    <property type="entry name" value="UPF0253"/>
</dbReference>
<dbReference type="NCBIfam" id="NF003436">
    <property type="entry name" value="PRK04964.1"/>
    <property type="match status" value="1"/>
</dbReference>
<dbReference type="Pfam" id="PF06786">
    <property type="entry name" value="UPF0253"/>
    <property type="match status" value="1"/>
</dbReference>